<proteinExistence type="inferred from homology"/>
<evidence type="ECO:0000255" key="1">
    <source>
        <dbReference type="HAMAP-Rule" id="MF_01182"/>
    </source>
</evidence>
<protein>
    <recommendedName>
        <fullName evidence="1">Cytochrome c-552</fullName>
        <ecNumber evidence="1">1.7.2.2</ecNumber>
    </recommendedName>
    <alternativeName>
        <fullName evidence="1">Ammonia-forming cytochrome c nitrite reductase</fullName>
        <shortName evidence="1">Cytochrome c nitrite reductase</shortName>
    </alternativeName>
</protein>
<name>NRFA_ECOHS</name>
<feature type="signal peptide" evidence="1">
    <location>
        <begin position="1"/>
        <end position="26"/>
    </location>
</feature>
<feature type="chain" id="PRO_1000065802" description="Cytochrome c-552">
    <location>
        <begin position="27"/>
        <end position="478"/>
    </location>
</feature>
<feature type="binding site" description="axial binding residue" evidence="1">
    <location>
        <position position="94"/>
    </location>
    <ligand>
        <name>heme c</name>
        <dbReference type="ChEBI" id="CHEBI:61717"/>
        <label>3</label>
    </ligand>
    <ligandPart>
        <name>Fe</name>
        <dbReference type="ChEBI" id="CHEBI:18248"/>
    </ligandPart>
</feature>
<feature type="binding site" description="covalent" evidence="1">
    <location>
        <position position="122"/>
    </location>
    <ligand>
        <name>heme</name>
        <dbReference type="ChEBI" id="CHEBI:30413"/>
        <label>1</label>
    </ligand>
</feature>
<feature type="binding site" description="covalent" evidence="1">
    <location>
        <position position="125"/>
    </location>
    <ligand>
        <name>heme</name>
        <dbReference type="ChEBI" id="CHEBI:30413"/>
        <label>1</label>
    </ligand>
</feature>
<feature type="binding site" description="axial binding residue" evidence="1">
    <location>
        <position position="126"/>
    </location>
    <ligand>
        <name>heme</name>
        <dbReference type="ChEBI" id="CHEBI:30413"/>
        <label>1</label>
    </ligand>
    <ligandPart>
        <name>Fe</name>
        <dbReference type="ChEBI" id="CHEBI:18248"/>
    </ligandPart>
</feature>
<feature type="binding site" description="covalent" evidence="1">
    <location>
        <position position="160"/>
    </location>
    <ligand>
        <name>heme c</name>
        <dbReference type="ChEBI" id="CHEBI:61717"/>
        <label>2</label>
    </ligand>
</feature>
<feature type="binding site" description="covalent" evidence="1">
    <location>
        <position position="163"/>
    </location>
    <ligand>
        <name>heme c</name>
        <dbReference type="ChEBI" id="CHEBI:61717"/>
        <label>2</label>
    </ligand>
</feature>
<feature type="binding site" description="axial binding residue" evidence="1">
    <location>
        <position position="164"/>
    </location>
    <ligand>
        <name>heme c</name>
        <dbReference type="ChEBI" id="CHEBI:61717"/>
        <label>2</label>
    </ligand>
    <ligandPart>
        <name>Fe</name>
        <dbReference type="ChEBI" id="CHEBI:18248"/>
    </ligandPart>
</feature>
<feature type="binding site" description="covalent" evidence="1">
    <location>
        <position position="209"/>
    </location>
    <ligand>
        <name>heme c</name>
        <dbReference type="ChEBI" id="CHEBI:61717"/>
        <label>3</label>
    </ligand>
</feature>
<feature type="binding site" description="covalent" evidence="1">
    <location>
        <position position="212"/>
    </location>
    <ligand>
        <name>heme c</name>
        <dbReference type="ChEBI" id="CHEBI:61717"/>
        <label>3</label>
    </ligand>
</feature>
<feature type="binding site" description="axial binding residue" evidence="1">
    <location>
        <position position="213"/>
    </location>
    <ligand>
        <name>heme c</name>
        <dbReference type="ChEBI" id="CHEBI:61717"/>
        <label>3</label>
    </ligand>
    <ligandPart>
        <name>Fe</name>
        <dbReference type="ChEBI" id="CHEBI:18248"/>
    </ligandPart>
</feature>
<feature type="binding site" evidence="1">
    <location>
        <position position="215"/>
    </location>
    <ligand>
        <name>Ca(2+)</name>
        <dbReference type="ChEBI" id="CHEBI:29108"/>
    </ligand>
</feature>
<feature type="binding site" evidence="1">
    <location>
        <position position="216"/>
    </location>
    <ligand>
        <name>Ca(2+)</name>
        <dbReference type="ChEBI" id="CHEBI:29108"/>
    </ligand>
</feature>
<feature type="binding site" evidence="1">
    <location>
        <position position="216"/>
    </location>
    <ligand>
        <name>substrate</name>
    </ligand>
</feature>
<feature type="binding site" evidence="1">
    <location>
        <position position="261"/>
    </location>
    <ligand>
        <name>Ca(2+)</name>
        <dbReference type="ChEBI" id="CHEBI:29108"/>
    </ligand>
</feature>
<feature type="binding site" evidence="1">
    <location>
        <position position="263"/>
    </location>
    <ligand>
        <name>Ca(2+)</name>
        <dbReference type="ChEBI" id="CHEBI:29108"/>
    </ligand>
</feature>
<feature type="binding site" evidence="1">
    <location>
        <position position="264"/>
    </location>
    <ligand>
        <name>substrate</name>
    </ligand>
</feature>
<feature type="binding site" description="axial binding residue" evidence="1">
    <location>
        <position position="275"/>
    </location>
    <ligand>
        <name>heme c</name>
        <dbReference type="ChEBI" id="CHEBI:61717"/>
        <label>5</label>
    </ligand>
    <ligandPart>
        <name>Fe</name>
        <dbReference type="ChEBI" id="CHEBI:18248"/>
    </ligandPart>
</feature>
<feature type="binding site" description="covalent" evidence="1">
    <location>
        <position position="282"/>
    </location>
    <ligand>
        <name>heme c</name>
        <dbReference type="ChEBI" id="CHEBI:61717"/>
        <label>4</label>
    </ligand>
</feature>
<feature type="binding site" description="covalent" evidence="1">
    <location>
        <position position="285"/>
    </location>
    <ligand>
        <name>heme c</name>
        <dbReference type="ChEBI" id="CHEBI:61717"/>
        <label>4</label>
    </ligand>
</feature>
<feature type="binding site" description="axial binding residue" evidence="1">
    <location>
        <position position="286"/>
    </location>
    <ligand>
        <name>heme c</name>
        <dbReference type="ChEBI" id="CHEBI:61717"/>
        <label>4</label>
    </ligand>
    <ligandPart>
        <name>Fe</name>
        <dbReference type="ChEBI" id="CHEBI:18248"/>
    </ligandPart>
</feature>
<feature type="binding site" description="axial binding residue" evidence="1">
    <location>
        <position position="301"/>
    </location>
    <ligand>
        <name>heme c</name>
        <dbReference type="ChEBI" id="CHEBI:61717"/>
        <label>2</label>
    </ligand>
    <ligandPart>
        <name>Fe</name>
        <dbReference type="ChEBI" id="CHEBI:18248"/>
    </ligandPart>
</feature>
<feature type="binding site" description="covalent" evidence="1">
    <location>
        <position position="314"/>
    </location>
    <ligand>
        <name>heme c</name>
        <dbReference type="ChEBI" id="CHEBI:61717"/>
        <label>5</label>
    </ligand>
</feature>
<feature type="binding site" description="covalent" evidence="1">
    <location>
        <position position="317"/>
    </location>
    <ligand>
        <name>heme c</name>
        <dbReference type="ChEBI" id="CHEBI:61717"/>
        <label>5</label>
    </ligand>
</feature>
<feature type="binding site" description="axial binding residue" evidence="1">
    <location>
        <position position="318"/>
    </location>
    <ligand>
        <name>heme c</name>
        <dbReference type="ChEBI" id="CHEBI:61717"/>
        <label>5</label>
    </ligand>
    <ligandPart>
        <name>Fe</name>
        <dbReference type="ChEBI" id="CHEBI:18248"/>
    </ligandPart>
</feature>
<feature type="binding site" description="axial binding residue" evidence="1">
    <location>
        <position position="393"/>
    </location>
    <ligand>
        <name>heme c</name>
        <dbReference type="ChEBI" id="CHEBI:61717"/>
        <label>4</label>
    </ligand>
    <ligandPart>
        <name>Fe</name>
        <dbReference type="ChEBI" id="CHEBI:18248"/>
    </ligandPart>
</feature>
<organism>
    <name type="scientific">Escherichia coli O9:H4 (strain HS)</name>
    <dbReference type="NCBI Taxonomy" id="331112"/>
    <lineage>
        <taxon>Bacteria</taxon>
        <taxon>Pseudomonadati</taxon>
        <taxon>Pseudomonadota</taxon>
        <taxon>Gammaproteobacteria</taxon>
        <taxon>Enterobacterales</taxon>
        <taxon>Enterobacteriaceae</taxon>
        <taxon>Escherichia</taxon>
    </lineage>
</organism>
<keyword id="KW-0106">Calcium</keyword>
<keyword id="KW-0249">Electron transport</keyword>
<keyword id="KW-0349">Heme</keyword>
<keyword id="KW-0408">Iron</keyword>
<keyword id="KW-0479">Metal-binding</keyword>
<keyword id="KW-0560">Oxidoreductase</keyword>
<keyword id="KW-0574">Periplasm</keyword>
<keyword id="KW-0732">Signal</keyword>
<keyword id="KW-0813">Transport</keyword>
<dbReference type="EC" id="1.7.2.2" evidence="1"/>
<dbReference type="EMBL" id="CP000802">
    <property type="protein sequence ID" value="ABV08475.1"/>
    <property type="molecule type" value="Genomic_DNA"/>
</dbReference>
<dbReference type="RefSeq" id="WP_001365050.1">
    <property type="nucleotide sequence ID" value="NC_009800.1"/>
</dbReference>
<dbReference type="SMR" id="A8A7H1"/>
<dbReference type="KEGG" id="ecx:EcHS_A4315"/>
<dbReference type="HOGENOM" id="CLU_035040_1_0_6"/>
<dbReference type="UniPathway" id="UPA00653"/>
<dbReference type="GO" id="GO:0030288">
    <property type="term" value="C:outer membrane-bounded periplasmic space"/>
    <property type="evidence" value="ECO:0007669"/>
    <property type="project" value="TreeGrafter"/>
</dbReference>
<dbReference type="GO" id="GO:0005509">
    <property type="term" value="F:calcium ion binding"/>
    <property type="evidence" value="ECO:0007669"/>
    <property type="project" value="UniProtKB-UniRule"/>
</dbReference>
<dbReference type="GO" id="GO:0020037">
    <property type="term" value="F:heme binding"/>
    <property type="evidence" value="ECO:0007669"/>
    <property type="project" value="InterPro"/>
</dbReference>
<dbReference type="GO" id="GO:0005506">
    <property type="term" value="F:iron ion binding"/>
    <property type="evidence" value="ECO:0007669"/>
    <property type="project" value="UniProtKB-UniRule"/>
</dbReference>
<dbReference type="GO" id="GO:0042279">
    <property type="term" value="F:nitrite reductase (cytochrome, ammonia-forming) activity"/>
    <property type="evidence" value="ECO:0007669"/>
    <property type="project" value="UniProtKB-UniRule"/>
</dbReference>
<dbReference type="GO" id="GO:0019645">
    <property type="term" value="P:anaerobic electron transport chain"/>
    <property type="evidence" value="ECO:0007669"/>
    <property type="project" value="TreeGrafter"/>
</dbReference>
<dbReference type="GO" id="GO:0042128">
    <property type="term" value="P:nitrate assimilation"/>
    <property type="evidence" value="ECO:0007669"/>
    <property type="project" value="UniProtKB-UniRule"/>
</dbReference>
<dbReference type="CDD" id="cd00548">
    <property type="entry name" value="NrfA-like"/>
    <property type="match status" value="1"/>
</dbReference>
<dbReference type="FunFam" id="1.10.1130.10:FF:000002">
    <property type="entry name" value="Cytochrome c-552"/>
    <property type="match status" value="1"/>
</dbReference>
<dbReference type="FunFam" id="1.20.140.10:FF:000014">
    <property type="entry name" value="Cytochrome c-552"/>
    <property type="match status" value="1"/>
</dbReference>
<dbReference type="Gene3D" id="1.20.140.10">
    <property type="entry name" value="Butyryl-CoA Dehydrogenase, subunit A, domain 3"/>
    <property type="match status" value="1"/>
</dbReference>
<dbReference type="Gene3D" id="1.10.1130.10">
    <property type="entry name" value="Flavocytochrome C3, Chain A"/>
    <property type="match status" value="1"/>
</dbReference>
<dbReference type="HAMAP" id="MF_01182">
    <property type="entry name" value="Cytochrom_C552"/>
    <property type="match status" value="1"/>
</dbReference>
<dbReference type="InterPro" id="IPR003321">
    <property type="entry name" value="Cyt_c552"/>
</dbReference>
<dbReference type="InterPro" id="IPR017570">
    <property type="entry name" value="Cyt_c_NO2Rdtase_formate-dep"/>
</dbReference>
<dbReference type="InterPro" id="IPR036280">
    <property type="entry name" value="Multihaem_cyt_sf"/>
</dbReference>
<dbReference type="NCBIfam" id="TIGR03152">
    <property type="entry name" value="cyto_c552_HCOOH"/>
    <property type="match status" value="1"/>
</dbReference>
<dbReference type="NCBIfam" id="NF008339">
    <property type="entry name" value="PRK11125.1"/>
    <property type="match status" value="1"/>
</dbReference>
<dbReference type="PANTHER" id="PTHR30633:SF0">
    <property type="entry name" value="CYTOCHROME C-552"/>
    <property type="match status" value="1"/>
</dbReference>
<dbReference type="PANTHER" id="PTHR30633">
    <property type="entry name" value="CYTOCHROME C-552 RESPIRATORY NITRITE REDUCTASE"/>
    <property type="match status" value="1"/>
</dbReference>
<dbReference type="Pfam" id="PF02335">
    <property type="entry name" value="Cytochrom_C552"/>
    <property type="match status" value="1"/>
</dbReference>
<dbReference type="PIRSF" id="PIRSF000243">
    <property type="entry name" value="Cyt_c552"/>
    <property type="match status" value="1"/>
</dbReference>
<dbReference type="SUPFAM" id="SSF48695">
    <property type="entry name" value="Multiheme cytochromes"/>
    <property type="match status" value="1"/>
</dbReference>
<dbReference type="PROSITE" id="PS51008">
    <property type="entry name" value="MULTIHEME_CYTC"/>
    <property type="match status" value="1"/>
</dbReference>
<gene>
    <name evidence="1" type="primary">nrfA</name>
    <name type="ordered locus">EcHS_A4315</name>
</gene>
<reference key="1">
    <citation type="journal article" date="2008" name="J. Bacteriol.">
        <title>The pangenome structure of Escherichia coli: comparative genomic analysis of E. coli commensal and pathogenic isolates.</title>
        <authorList>
            <person name="Rasko D.A."/>
            <person name="Rosovitz M.J."/>
            <person name="Myers G.S.A."/>
            <person name="Mongodin E.F."/>
            <person name="Fricke W.F."/>
            <person name="Gajer P."/>
            <person name="Crabtree J."/>
            <person name="Sebaihia M."/>
            <person name="Thomson N.R."/>
            <person name="Chaudhuri R."/>
            <person name="Henderson I.R."/>
            <person name="Sperandio V."/>
            <person name="Ravel J."/>
        </authorList>
    </citation>
    <scope>NUCLEOTIDE SEQUENCE [LARGE SCALE GENOMIC DNA]</scope>
    <source>
        <strain>HS</strain>
    </source>
</reference>
<accession>A8A7H1</accession>
<sequence length="478" mass="53708">MTRIKINARRIFSLLIPFFFFTSVHAEQTAAPAKTVTVEAKNETFAPQHPDQYLSWKATSEQSERVDALAEDPRLVILWAGYPFSRDYNKPRGHAFAVTDVRETLRTGAPKNAEDGPLPMACWSCKSPDVARLIQKDGEDGYFHGKWARGGPEIVNNLGCADCHNTASPEFAKGKPELTLSRPYAARAMEAIGKPFEKAGRFDQQSMVCGQCHVEYYFDGKNKAVKFPWDDGMKVENMEQYYDKIAFSDWTNSLSKTPMLKAQHPEYETWTAGIHGKNNVTCIDCHMPKVQNAEGKLYTDHKIGNPFDNFAQTCANCHTQDKAALQKVVAERKQSINDLKIKVEDQLVHAHFEAKAALDAGATEAEMKPIQDDIRHAQWRWDLAIASHGIHMHAPEEGLRMLGTAMDKAADARTKLARLLATKGITHEIEIPDISTKEKAQQAIGLNMEQIKAEKQDFIKTVIPQWEEQARKNGLLSQ</sequence>
<comment type="function">
    <text evidence="1">Catalyzes the reduction of nitrite to ammonia, consuming six electrons in the process.</text>
</comment>
<comment type="catalytic activity">
    <reaction evidence="1">
        <text>6 Fe(III)-[cytochrome c] + NH4(+) + 2 H2O = 6 Fe(II)-[cytochrome c] + nitrite + 8 H(+)</text>
        <dbReference type="Rhea" id="RHEA:13089"/>
        <dbReference type="Rhea" id="RHEA-COMP:10350"/>
        <dbReference type="Rhea" id="RHEA-COMP:14399"/>
        <dbReference type="ChEBI" id="CHEBI:15377"/>
        <dbReference type="ChEBI" id="CHEBI:15378"/>
        <dbReference type="ChEBI" id="CHEBI:16301"/>
        <dbReference type="ChEBI" id="CHEBI:28938"/>
        <dbReference type="ChEBI" id="CHEBI:29033"/>
        <dbReference type="ChEBI" id="CHEBI:29034"/>
        <dbReference type="EC" id="1.7.2.2"/>
    </reaction>
</comment>
<comment type="cofactor">
    <cofactor evidence="1">
        <name>Ca(2+)</name>
        <dbReference type="ChEBI" id="CHEBI:29108"/>
    </cofactor>
    <text evidence="1">Binds 1 Ca(2+) ion per monomer.</text>
</comment>
<comment type="cofactor">
    <cofactor evidence="1">
        <name>heme c</name>
        <dbReference type="ChEBI" id="CHEBI:61717"/>
    </cofactor>
    <text evidence="1">Binds 5 heme c groups covalently per monomer.</text>
</comment>
<comment type="pathway">
    <text evidence="1">Nitrogen metabolism; nitrate reduction (assimilation).</text>
</comment>
<comment type="subcellular location">
    <subcellularLocation>
        <location evidence="1">Periplasm</location>
    </subcellularLocation>
</comment>
<comment type="similarity">
    <text evidence="1">Belongs to the cytochrome c-552 family.</text>
</comment>